<reference key="1">
    <citation type="journal article" date="2004" name="Biochem. J.">
        <title>GBPI, a novel gastrointestinal- and brain-specific PP1-inhibitory protein, is activated by PKC and inactivated by PKA.</title>
        <authorList>
            <person name="Liu Q.-R."/>
            <person name="Zhang P.-W."/>
            <person name="Lin Z."/>
            <person name="Li Q.-F."/>
            <person name="Woods A.S."/>
            <person name="Troncoso J."/>
            <person name="Uhl G.R."/>
        </authorList>
    </citation>
    <scope>NUCLEOTIDE SEQUENCE [MRNA]</scope>
    <scope>FUNCTION</scope>
    <scope>PHOSPHORYLATION AT THR-58</scope>
    <scope>MUTAGENESIS OF 21-LYS-LYS-22; TRP-25 AND THR-58</scope>
    <scope>TISSUE SPECIFICITY</scope>
</reference>
<reference key="2">
    <citation type="journal article" date="2004" name="Nat. Genet.">
        <title>Complete sequencing and characterization of 21,243 full-length human cDNAs.</title>
        <authorList>
            <person name="Ota T."/>
            <person name="Suzuki Y."/>
            <person name="Nishikawa T."/>
            <person name="Otsuki T."/>
            <person name="Sugiyama T."/>
            <person name="Irie R."/>
            <person name="Wakamatsu A."/>
            <person name="Hayashi K."/>
            <person name="Sato H."/>
            <person name="Nagai K."/>
            <person name="Kimura K."/>
            <person name="Makita H."/>
            <person name="Sekine M."/>
            <person name="Obayashi M."/>
            <person name="Nishi T."/>
            <person name="Shibahara T."/>
            <person name="Tanaka T."/>
            <person name="Ishii S."/>
            <person name="Yamamoto J."/>
            <person name="Saito K."/>
            <person name="Kawai Y."/>
            <person name="Isono Y."/>
            <person name="Nakamura Y."/>
            <person name="Nagahari K."/>
            <person name="Murakami K."/>
            <person name="Yasuda T."/>
            <person name="Iwayanagi T."/>
            <person name="Wagatsuma M."/>
            <person name="Shiratori A."/>
            <person name="Sudo H."/>
            <person name="Hosoiri T."/>
            <person name="Kaku Y."/>
            <person name="Kodaira H."/>
            <person name="Kondo H."/>
            <person name="Sugawara M."/>
            <person name="Takahashi M."/>
            <person name="Kanda K."/>
            <person name="Yokoi T."/>
            <person name="Furuya T."/>
            <person name="Kikkawa E."/>
            <person name="Omura Y."/>
            <person name="Abe K."/>
            <person name="Kamihara K."/>
            <person name="Katsuta N."/>
            <person name="Sato K."/>
            <person name="Tanikawa M."/>
            <person name="Yamazaki M."/>
            <person name="Ninomiya K."/>
            <person name="Ishibashi T."/>
            <person name="Yamashita H."/>
            <person name="Murakawa K."/>
            <person name="Fujimori K."/>
            <person name="Tanai H."/>
            <person name="Kimata M."/>
            <person name="Watanabe M."/>
            <person name="Hiraoka S."/>
            <person name="Chiba Y."/>
            <person name="Ishida S."/>
            <person name="Ono Y."/>
            <person name="Takiguchi S."/>
            <person name="Watanabe S."/>
            <person name="Yosida M."/>
            <person name="Hotuta T."/>
            <person name="Kusano J."/>
            <person name="Kanehori K."/>
            <person name="Takahashi-Fujii A."/>
            <person name="Hara H."/>
            <person name="Tanase T.-O."/>
            <person name="Nomura Y."/>
            <person name="Togiya S."/>
            <person name="Komai F."/>
            <person name="Hara R."/>
            <person name="Takeuchi K."/>
            <person name="Arita M."/>
            <person name="Imose N."/>
            <person name="Musashino K."/>
            <person name="Yuuki H."/>
            <person name="Oshima A."/>
            <person name="Sasaki N."/>
            <person name="Aotsuka S."/>
            <person name="Yoshikawa Y."/>
            <person name="Matsunawa H."/>
            <person name="Ichihara T."/>
            <person name="Shiohata N."/>
            <person name="Sano S."/>
            <person name="Moriya S."/>
            <person name="Momiyama H."/>
            <person name="Satoh N."/>
            <person name="Takami S."/>
            <person name="Terashima Y."/>
            <person name="Suzuki O."/>
            <person name="Nakagawa S."/>
            <person name="Senoh A."/>
            <person name="Mizoguchi H."/>
            <person name="Goto Y."/>
            <person name="Shimizu F."/>
            <person name="Wakebe H."/>
            <person name="Hishigaki H."/>
            <person name="Watanabe T."/>
            <person name="Sugiyama A."/>
            <person name="Takemoto M."/>
            <person name="Kawakami B."/>
            <person name="Yamazaki M."/>
            <person name="Watanabe K."/>
            <person name="Kumagai A."/>
            <person name="Itakura S."/>
            <person name="Fukuzumi Y."/>
            <person name="Fujimori Y."/>
            <person name="Komiyama M."/>
            <person name="Tashiro H."/>
            <person name="Tanigami A."/>
            <person name="Fujiwara T."/>
            <person name="Ono T."/>
            <person name="Yamada K."/>
            <person name="Fujii Y."/>
            <person name="Ozaki K."/>
            <person name="Hirao M."/>
            <person name="Ohmori Y."/>
            <person name="Kawabata A."/>
            <person name="Hikiji T."/>
            <person name="Kobatake N."/>
            <person name="Inagaki H."/>
            <person name="Ikema Y."/>
            <person name="Okamoto S."/>
            <person name="Okitani R."/>
            <person name="Kawakami T."/>
            <person name="Noguchi S."/>
            <person name="Itoh T."/>
            <person name="Shigeta K."/>
            <person name="Senba T."/>
            <person name="Matsumura K."/>
            <person name="Nakajima Y."/>
            <person name="Mizuno T."/>
            <person name="Morinaga M."/>
            <person name="Sasaki M."/>
            <person name="Togashi T."/>
            <person name="Oyama M."/>
            <person name="Hata H."/>
            <person name="Watanabe M."/>
            <person name="Komatsu T."/>
            <person name="Mizushima-Sugano J."/>
            <person name="Satoh T."/>
            <person name="Shirai Y."/>
            <person name="Takahashi Y."/>
            <person name="Nakagawa K."/>
            <person name="Okumura K."/>
            <person name="Nagase T."/>
            <person name="Nomura N."/>
            <person name="Kikuchi H."/>
            <person name="Masuho Y."/>
            <person name="Yamashita R."/>
            <person name="Nakai K."/>
            <person name="Yada T."/>
            <person name="Nakamura Y."/>
            <person name="Ohara O."/>
            <person name="Isogai T."/>
            <person name="Sugano S."/>
        </authorList>
    </citation>
    <scope>NUCLEOTIDE SEQUENCE [LARGE SCALE MRNA]</scope>
    <source>
        <tissue>Colon mucosa</tissue>
    </source>
</reference>
<reference key="3">
    <citation type="journal article" date="2004" name="Genome Res.">
        <title>The status, quality, and expansion of the NIH full-length cDNA project: the Mammalian Gene Collection (MGC).</title>
        <authorList>
            <consortium name="The MGC Project Team"/>
        </authorList>
    </citation>
    <scope>NUCLEOTIDE SEQUENCE [LARGE SCALE MRNA]</scope>
</reference>
<protein>
    <recommendedName>
        <fullName>Protein phosphatase 1 regulatory subunit 14D</fullName>
    </recommendedName>
    <alternativeName>
        <fullName>Gastrointestinal and brain-specific PP1-inhibitory protein 1</fullName>
        <shortName>GBPI-1</shortName>
    </alternativeName>
</protein>
<accession>Q9NXH3</accession>
<accession>Q4V773</accession>
<comment type="function">
    <text evidence="2">Inhibitor of PPP1CA. Has inhibitory activity only when phosphorylated, creating a molecular switch for regulating the phosphorylation status of PPP1CA substrates and smooth muscle contraction.</text>
</comment>
<comment type="subcellular location">
    <subcellularLocation>
        <location evidence="3">Cytoplasm</location>
    </subcellularLocation>
</comment>
<comment type="tissue specificity">
    <text evidence="2">Detected in colon, intestine, kidney and brain cortex.</text>
</comment>
<comment type="PTM">
    <text evidence="2">Phosphorylated on several residues.</text>
</comment>
<comment type="similarity">
    <text evidence="3">Belongs to the PP1 inhibitor family.</text>
</comment>
<sequence length="145" mass="16508">MLSSSPASCTSPSPDGENPCKKVHWASGRRRTSSTDSESKSHPDSSKIPRSRRPSRLTVKYDRGQLQRWLEMEQWVDAQVQELFQDQATPSEPEIDLEALMDLSTEEQKTQLEAILGNCPRPTEAFISELLSQLKKLRRLSRPQK</sequence>
<proteinExistence type="evidence at protein level"/>
<name>PP14D_HUMAN</name>
<feature type="chain" id="PRO_0000071497" description="Protein phosphatase 1 regulatory subunit 14D">
    <location>
        <begin position="1"/>
        <end position="145"/>
    </location>
</feature>
<feature type="region of interest" description="Disordered" evidence="1">
    <location>
        <begin position="1"/>
        <end position="59"/>
    </location>
</feature>
<feature type="region of interest" description="Interaction with protein phosphatase 1">
    <location>
        <begin position="21"/>
        <end position="25"/>
    </location>
</feature>
<feature type="compositionally biased region" description="Low complexity" evidence="1">
    <location>
        <begin position="1"/>
        <end position="14"/>
    </location>
</feature>
<feature type="compositionally biased region" description="Basic residues" evidence="1">
    <location>
        <begin position="21"/>
        <end position="32"/>
    </location>
</feature>
<feature type="compositionally biased region" description="Basic and acidic residues" evidence="1">
    <location>
        <begin position="37"/>
        <end position="47"/>
    </location>
</feature>
<feature type="modified residue" description="Phosphothreonine" evidence="4">
    <location>
        <position position="58"/>
    </location>
</feature>
<feature type="mutagenesis site" description="Reduces inhibitory activity by 57%." evidence="2">
    <original>KK</original>
    <variation>EE</variation>
    <location>
        <begin position="21"/>
        <end position="22"/>
    </location>
</feature>
<feature type="mutagenesis site" description="Reduces inhibitory activity by 13%." evidence="2">
    <original>W</original>
    <variation>A</variation>
    <location>
        <position position="25"/>
    </location>
</feature>
<feature type="mutagenesis site" description="Reduces inhibitory activity by 16%. Reduces phosphorylation." evidence="2">
    <original>T</original>
    <variation>E</variation>
    <location>
        <position position="58"/>
    </location>
</feature>
<gene>
    <name type="primary">PPP1R14D</name>
    <name type="synonym">GBPI</name>
</gene>
<keyword id="KW-0963">Cytoplasm</keyword>
<keyword id="KW-0597">Phosphoprotein</keyword>
<keyword id="KW-0650">Protein phosphatase inhibitor</keyword>
<keyword id="KW-1267">Proteomics identification</keyword>
<keyword id="KW-1185">Reference proteome</keyword>
<organism>
    <name type="scientific">Homo sapiens</name>
    <name type="common">Human</name>
    <dbReference type="NCBI Taxonomy" id="9606"/>
    <lineage>
        <taxon>Eukaryota</taxon>
        <taxon>Metazoa</taxon>
        <taxon>Chordata</taxon>
        <taxon>Craniata</taxon>
        <taxon>Vertebrata</taxon>
        <taxon>Euteleostomi</taxon>
        <taxon>Mammalia</taxon>
        <taxon>Eutheria</taxon>
        <taxon>Euarchontoglires</taxon>
        <taxon>Primates</taxon>
        <taxon>Haplorrhini</taxon>
        <taxon>Catarrhini</taxon>
        <taxon>Hominidae</taxon>
        <taxon>Homo</taxon>
    </lineage>
</organism>
<dbReference type="EMBL" id="AY050671">
    <property type="protein sequence ID" value="AAL25829.1"/>
    <property type="molecule type" value="mRNA"/>
</dbReference>
<dbReference type="EMBL" id="AK000258">
    <property type="protein sequence ID" value="BAA91037.1"/>
    <property type="molecule type" value="mRNA"/>
</dbReference>
<dbReference type="EMBL" id="BC096716">
    <property type="protein sequence ID" value="AAH96716.1"/>
    <property type="molecule type" value="mRNA"/>
</dbReference>
<dbReference type="EMBL" id="BC098124">
    <property type="protein sequence ID" value="AAH98124.1"/>
    <property type="molecule type" value="mRNA"/>
</dbReference>
<dbReference type="CCDS" id="CCDS10066.1"/>
<dbReference type="RefSeq" id="NP_060196.1">
    <property type="nucleotide sequence ID" value="NM_017726.8"/>
</dbReference>
<dbReference type="BioGRID" id="120215">
    <property type="interactions" value="4"/>
</dbReference>
<dbReference type="FunCoup" id="Q9NXH3">
    <property type="interactions" value="2"/>
</dbReference>
<dbReference type="IntAct" id="Q9NXH3">
    <property type="interactions" value="3"/>
</dbReference>
<dbReference type="STRING" id="9606.ENSP00000398342"/>
<dbReference type="GlyGen" id="Q9NXH3">
    <property type="glycosylation" value="1 site"/>
</dbReference>
<dbReference type="iPTMnet" id="Q9NXH3"/>
<dbReference type="PhosphoSitePlus" id="Q9NXH3"/>
<dbReference type="BioMuta" id="PPP1R14D"/>
<dbReference type="DMDM" id="55583999"/>
<dbReference type="MassIVE" id="Q9NXH3"/>
<dbReference type="PaxDb" id="9606-ENSP00000398342"/>
<dbReference type="PeptideAtlas" id="Q9NXH3"/>
<dbReference type="ProteomicsDB" id="83098"/>
<dbReference type="Antibodypedia" id="49878">
    <property type="antibodies" value="63 antibodies from 23 providers"/>
</dbReference>
<dbReference type="DNASU" id="54866"/>
<dbReference type="Ensembl" id="ENST00000299174.10">
    <property type="protein sequence ID" value="ENSP00000299174.6"/>
    <property type="gene ID" value="ENSG00000166143.10"/>
</dbReference>
<dbReference type="GeneID" id="54866"/>
<dbReference type="KEGG" id="hsa:54866"/>
<dbReference type="MANE-Select" id="ENST00000299174.10">
    <property type="protein sequence ID" value="ENSP00000299174.6"/>
    <property type="RefSeq nucleotide sequence ID" value="NM_017726.8"/>
    <property type="RefSeq protein sequence ID" value="NP_060196.1"/>
</dbReference>
<dbReference type="UCSC" id="uc001zmy.3">
    <property type="organism name" value="human"/>
</dbReference>
<dbReference type="AGR" id="HGNC:14953"/>
<dbReference type="CTD" id="54866"/>
<dbReference type="DisGeNET" id="54866"/>
<dbReference type="GeneCards" id="PPP1R14D"/>
<dbReference type="HGNC" id="HGNC:14953">
    <property type="gene designation" value="PPP1R14D"/>
</dbReference>
<dbReference type="HPA" id="ENSG00000166143">
    <property type="expression patterns" value="Tissue enriched (intestine)"/>
</dbReference>
<dbReference type="MIM" id="613256">
    <property type="type" value="gene"/>
</dbReference>
<dbReference type="neXtProt" id="NX_Q9NXH3"/>
<dbReference type="OpenTargets" id="ENSG00000166143"/>
<dbReference type="PharmGKB" id="PA33631"/>
<dbReference type="VEuPathDB" id="HostDB:ENSG00000166143"/>
<dbReference type="eggNOG" id="ENOG502TKY0">
    <property type="taxonomic scope" value="Eukaryota"/>
</dbReference>
<dbReference type="GeneTree" id="ENSGT00950000182985"/>
<dbReference type="HOGENOM" id="CLU_114155_0_0_1"/>
<dbReference type="InParanoid" id="Q9NXH3"/>
<dbReference type="OMA" id="LDMEQWV"/>
<dbReference type="OrthoDB" id="8193882at2759"/>
<dbReference type="PAN-GO" id="Q9NXH3">
    <property type="GO annotations" value="1 GO annotation based on evolutionary models"/>
</dbReference>
<dbReference type="PhylomeDB" id="Q9NXH3"/>
<dbReference type="PathwayCommons" id="Q9NXH3"/>
<dbReference type="BioGRID-ORCS" id="54866">
    <property type="hits" value="13 hits in 1147 CRISPR screens"/>
</dbReference>
<dbReference type="GenomeRNAi" id="54866"/>
<dbReference type="Pharos" id="Q9NXH3">
    <property type="development level" value="Tbio"/>
</dbReference>
<dbReference type="PRO" id="PR:Q9NXH3"/>
<dbReference type="Proteomes" id="UP000005640">
    <property type="component" value="Chromosome 15"/>
</dbReference>
<dbReference type="RNAct" id="Q9NXH3">
    <property type="molecule type" value="protein"/>
</dbReference>
<dbReference type="Bgee" id="ENSG00000166143">
    <property type="expression patterns" value="Expressed in mucosa of transverse colon and 88 other cell types or tissues"/>
</dbReference>
<dbReference type="ExpressionAtlas" id="Q9NXH3">
    <property type="expression patterns" value="baseline and differential"/>
</dbReference>
<dbReference type="GO" id="GO:0005737">
    <property type="term" value="C:cytoplasm"/>
    <property type="evidence" value="ECO:0007669"/>
    <property type="project" value="UniProtKB-SubCell"/>
</dbReference>
<dbReference type="GO" id="GO:0004865">
    <property type="term" value="F:protein serine/threonine phosphatase inhibitor activity"/>
    <property type="evidence" value="ECO:0000314"/>
    <property type="project" value="UniProtKB"/>
</dbReference>
<dbReference type="FunFam" id="1.10.150.220:FF:000003">
    <property type="entry name" value="protein phosphatase 1 regulatory subunit 14D"/>
    <property type="match status" value="1"/>
</dbReference>
<dbReference type="Gene3D" id="1.10.150.220">
    <property type="entry name" value="CPI-17"/>
    <property type="match status" value="1"/>
</dbReference>
<dbReference type="InterPro" id="IPR008025">
    <property type="entry name" value="CPI-17"/>
</dbReference>
<dbReference type="InterPro" id="IPR036658">
    <property type="entry name" value="CPI-17_sf"/>
</dbReference>
<dbReference type="PANTHER" id="PTHR16188">
    <property type="entry name" value="PROTEIN PHOSPHATASE 1 INHIBITOR POTENTIATED BY PROTEIN KINASE C"/>
    <property type="match status" value="1"/>
</dbReference>
<dbReference type="PANTHER" id="PTHR16188:SF13">
    <property type="entry name" value="PROTEIN PHOSPHATASE 1 REGULATORY SUBUNIT 14D"/>
    <property type="match status" value="1"/>
</dbReference>
<dbReference type="Pfam" id="PF05361">
    <property type="entry name" value="PP1_inhibitor"/>
    <property type="match status" value="1"/>
</dbReference>
<dbReference type="SUPFAM" id="SSF81790">
    <property type="entry name" value="Myosin phosphatase inhibitor 17kDa protein, CPI-17"/>
    <property type="match status" value="1"/>
</dbReference>
<evidence type="ECO:0000256" key="1">
    <source>
        <dbReference type="SAM" id="MobiDB-lite"/>
    </source>
</evidence>
<evidence type="ECO:0000269" key="2">
    <source>
    </source>
</evidence>
<evidence type="ECO:0000305" key="3"/>
<evidence type="ECO:0000305" key="4">
    <source>
    </source>
</evidence>